<reference key="1">
    <citation type="journal article" date="2003" name="PLoS Biol.">
        <title>The genome sequence of Caenorhabditis briggsae: a platform for comparative genomics.</title>
        <authorList>
            <person name="Stein L.D."/>
            <person name="Bao Z."/>
            <person name="Blasiar D."/>
            <person name="Blumenthal T."/>
            <person name="Brent M.R."/>
            <person name="Chen N."/>
            <person name="Chinwalla A."/>
            <person name="Clarke L."/>
            <person name="Clee C."/>
            <person name="Coghlan A."/>
            <person name="Coulson A."/>
            <person name="D'Eustachio P."/>
            <person name="Fitch D.H.A."/>
            <person name="Fulton L.A."/>
            <person name="Fulton R.E."/>
            <person name="Griffiths-Jones S."/>
            <person name="Harris T.W."/>
            <person name="Hillier L.W."/>
            <person name="Kamath R."/>
            <person name="Kuwabara P.E."/>
            <person name="Mardis E.R."/>
            <person name="Marra M.A."/>
            <person name="Miner T.L."/>
            <person name="Minx P."/>
            <person name="Mullikin J.C."/>
            <person name="Plumb R.W."/>
            <person name="Rogers J."/>
            <person name="Schein J.E."/>
            <person name="Sohrmann M."/>
            <person name="Spieth J."/>
            <person name="Stajich J.E."/>
            <person name="Wei C."/>
            <person name="Willey D."/>
            <person name="Wilson R.K."/>
            <person name="Durbin R.M."/>
            <person name="Waterston R.H."/>
        </authorList>
    </citation>
    <scope>NUCLEOTIDE SEQUENCE [LARGE SCALE GENOMIC DNA]</scope>
    <source>
        <strain>AF16</strain>
    </source>
</reference>
<sequence>MMKRNNEGIGGEGVANSPPDDTQQKRRRIQFEAVKMPAVQSVTELRSRTVAIQAAKLRQTVLIKNKRISDLERENERAKRRQLTDESNFLKVYNLFSELEKFIWAQTKDEFGEVKMTPSAPAGTDVQGMTSEQYHSFVDTAKGNLRIAFNSYAKARHDRTTETANFIARLKTLMADPKLNINDIHKELAAKTASLLAQIDKLQAEAHRVQSENHNLERKRRHMVDKNTLLESRIQEMEKLLEEAHFETEKQMRLACKYEARLILEHEAASGNATASSSATLNQSEKKMGSPGSPPSESTSREIEALRADRDEQAAIAARRLQELEDTNRKLQSMAQDISKLKMETQSSVPSDVITNSEEYRNLKKYYSLAIKEHERICKDLEDVTVERDQLRSVKENREKMMSEEHQKTIKEIQHQSEIHNTFYRVSHDSEVLRAEFETVKEEYNKTVKQSEWDEMKATVNTLRSLNKTMKSQMQRMKDREKASQKEHSAVKTELKTLKDQLEKSVLVPLEDSGNTSTEDANKIRAEYESLKREIRRIGAMDKQEKQRQLDREIQRHIADKVTELETLRKTNEALTNDEQTLSDELEVVCLTIEEEQERNAQLFMEKRDQEDRNLKMMNERMIQNQVQSRMREKLECLESKAQTDAQIAKMHEFEKKASDEVLNKLTENLQFKTSEVTRLSNMMEVHRKQTQELGFARDENQVKVDRCEAQLKQYQDLYGSKSREVEEAKFKRQRAEEELELVRVKYERAKRNDSAQTGDQVLQEANRQMKETLTCPSCKTRPKDCIMLKCYHLFCETCIKTMYDTRQRKCPKCNSNFGANDFHRIFI</sequence>
<dbReference type="EC" id="2.3.2.27" evidence="1"/>
<dbReference type="EMBL" id="HE600963">
    <property type="protein sequence ID" value="CAP35663.3"/>
    <property type="molecule type" value="Genomic_DNA"/>
</dbReference>
<dbReference type="SMR" id="Q60YN5"/>
<dbReference type="FunCoup" id="Q60YN5">
    <property type="interactions" value="3116"/>
</dbReference>
<dbReference type="STRING" id="6238.Q60YN5"/>
<dbReference type="EnsemblMetazoa" id="CBG18162.1">
    <property type="protein sequence ID" value="CBG18162.1"/>
    <property type="gene ID" value="WBGene00037633"/>
</dbReference>
<dbReference type="KEGG" id="cbr:CBG_18162"/>
<dbReference type="CTD" id="8584190"/>
<dbReference type="WormBase" id="CBG18162">
    <property type="protein sequence ID" value="CBP19234"/>
    <property type="gene ID" value="WBGene00037633"/>
    <property type="gene designation" value="Cbr-rfp-1"/>
</dbReference>
<dbReference type="eggNOG" id="KOG0978">
    <property type="taxonomic scope" value="Eukaryota"/>
</dbReference>
<dbReference type="HOGENOM" id="CLU_387448_0_0_1"/>
<dbReference type="InParanoid" id="Q60YN5"/>
<dbReference type="OMA" id="YRQMQEY"/>
<dbReference type="UniPathway" id="UPA00143"/>
<dbReference type="Proteomes" id="UP000008549">
    <property type="component" value="Unassembled WGS sequence"/>
</dbReference>
<dbReference type="GO" id="GO:0033503">
    <property type="term" value="C:HULC complex"/>
    <property type="evidence" value="ECO:0000318"/>
    <property type="project" value="GO_Central"/>
</dbReference>
<dbReference type="GO" id="GO:0016020">
    <property type="term" value="C:membrane"/>
    <property type="evidence" value="ECO:0007669"/>
    <property type="project" value="GOC"/>
</dbReference>
<dbReference type="GO" id="GO:0005634">
    <property type="term" value="C:nucleus"/>
    <property type="evidence" value="ECO:0000318"/>
    <property type="project" value="GO_Central"/>
</dbReference>
<dbReference type="GO" id="GO:0031624">
    <property type="term" value="F:ubiquitin conjugating enzyme binding"/>
    <property type="evidence" value="ECO:0007669"/>
    <property type="project" value="EnsemblMetazoa"/>
</dbReference>
<dbReference type="GO" id="GO:0061630">
    <property type="term" value="F:ubiquitin protein ligase activity"/>
    <property type="evidence" value="ECO:0000318"/>
    <property type="project" value="GO_Central"/>
</dbReference>
<dbReference type="GO" id="GO:0008270">
    <property type="term" value="F:zinc ion binding"/>
    <property type="evidence" value="ECO:0007669"/>
    <property type="project" value="UniProtKB-KW"/>
</dbReference>
<dbReference type="GO" id="GO:0006325">
    <property type="term" value="P:chromatin organization"/>
    <property type="evidence" value="ECO:0007669"/>
    <property type="project" value="UniProtKB-KW"/>
</dbReference>
<dbReference type="GO" id="GO:0006664">
    <property type="term" value="P:glycolipid metabolic process"/>
    <property type="evidence" value="ECO:0007669"/>
    <property type="project" value="EnsemblMetazoa"/>
</dbReference>
<dbReference type="GO" id="GO:0016567">
    <property type="term" value="P:protein ubiquitination"/>
    <property type="evidence" value="ECO:0007669"/>
    <property type="project" value="UniProtKB-UniPathway"/>
</dbReference>
<dbReference type="Gene3D" id="3.30.40.10">
    <property type="entry name" value="Zinc/RING finger domain, C3HC4 (zinc finger)"/>
    <property type="match status" value="1"/>
</dbReference>
<dbReference type="InterPro" id="IPR013956">
    <property type="entry name" value="E3_ubiquit_lig_Bre1"/>
</dbReference>
<dbReference type="InterPro" id="IPR018957">
    <property type="entry name" value="Znf_C3HC4_RING-type"/>
</dbReference>
<dbReference type="InterPro" id="IPR001841">
    <property type="entry name" value="Znf_RING"/>
</dbReference>
<dbReference type="InterPro" id="IPR013083">
    <property type="entry name" value="Znf_RING/FYVE/PHD"/>
</dbReference>
<dbReference type="InterPro" id="IPR017907">
    <property type="entry name" value="Znf_RING_CS"/>
</dbReference>
<dbReference type="PANTHER" id="PTHR23163:SF0">
    <property type="entry name" value="E3 UBIQUITIN-PROTEIN LIGASE BRE1"/>
    <property type="match status" value="1"/>
</dbReference>
<dbReference type="PANTHER" id="PTHR23163">
    <property type="entry name" value="RING FINGER PROTEIN-RELATED"/>
    <property type="match status" value="1"/>
</dbReference>
<dbReference type="Pfam" id="PF00097">
    <property type="entry name" value="zf-C3HC4"/>
    <property type="match status" value="1"/>
</dbReference>
<dbReference type="SMART" id="SM00184">
    <property type="entry name" value="RING"/>
    <property type="match status" value="1"/>
</dbReference>
<dbReference type="SUPFAM" id="SSF57850">
    <property type="entry name" value="RING/U-box"/>
    <property type="match status" value="1"/>
</dbReference>
<dbReference type="PROSITE" id="PS00518">
    <property type="entry name" value="ZF_RING_1"/>
    <property type="match status" value="1"/>
</dbReference>
<dbReference type="PROSITE" id="PS50089">
    <property type="entry name" value="ZF_RING_2"/>
    <property type="match status" value="1"/>
</dbReference>
<protein>
    <recommendedName>
        <fullName>E3 ubiquitin-protein ligase bre-1</fullName>
        <ecNumber evidence="1">2.3.2.27</ecNumber>
    </recommendedName>
    <alternativeName>
        <fullName>RING finger protein rfp-1</fullName>
    </alternativeName>
    <alternativeName>
        <fullName evidence="6">RING-type E3 ubiquitin transferase bre-1</fullName>
    </alternativeName>
</protein>
<name>BRE1_CAEBR</name>
<comment type="function">
    <text evidence="1 2">E3 ubiquitin-protein ligase that mediates monoubiquitination of 'Lys-117' of histone H2B (By similarity). H2B 'Lys-117' ubiquitination gives a specific tag for epigenetic transcriptional activation and is also prerequisite for histone H3 'Lys-4' and 'Lys-79' methylation (By similarity). Involved in regulating stem cell proliferative fate (By similarity).</text>
</comment>
<comment type="catalytic activity">
    <reaction evidence="1">
        <text>S-ubiquitinyl-[E2 ubiquitin-conjugating enzyme]-L-cysteine + [acceptor protein]-L-lysine = [E2 ubiquitin-conjugating enzyme]-L-cysteine + N(6)-ubiquitinyl-[acceptor protein]-L-lysine.</text>
        <dbReference type="EC" id="2.3.2.27"/>
    </reaction>
</comment>
<comment type="pathway">
    <text>Protein modification; protein ubiquitination.</text>
</comment>
<comment type="subunit">
    <text evidence="2">Interacts with ubc-1 (By similarity). Interacts with mrg-1 (By similarity).</text>
</comment>
<comment type="subcellular location">
    <subcellularLocation>
        <location evidence="2">Nucleus</location>
    </subcellularLocation>
</comment>
<comment type="similarity">
    <text evidence="6">Belongs to the BRE1 family.</text>
</comment>
<proteinExistence type="inferred from homology"/>
<evidence type="ECO:0000250" key="1">
    <source>
        <dbReference type="UniProtKB" id="O75150"/>
    </source>
</evidence>
<evidence type="ECO:0000250" key="2">
    <source>
        <dbReference type="UniProtKB" id="P34537"/>
    </source>
</evidence>
<evidence type="ECO:0000255" key="3"/>
<evidence type="ECO:0000255" key="4">
    <source>
        <dbReference type="PROSITE-ProRule" id="PRU00175"/>
    </source>
</evidence>
<evidence type="ECO:0000256" key="5">
    <source>
        <dbReference type="SAM" id="MobiDB-lite"/>
    </source>
</evidence>
<evidence type="ECO:0000305" key="6"/>
<gene>
    <name evidence="2" type="primary">rfp-1</name>
    <name type="synonym">bre-1</name>
    <name type="ORF">CBG18162</name>
</gene>
<feature type="chain" id="PRO_0000055844" description="E3 ubiquitin-protein ligase bre-1">
    <location>
        <begin position="1"/>
        <end position="828"/>
    </location>
</feature>
<feature type="zinc finger region" description="RING-type" evidence="4">
    <location>
        <begin position="776"/>
        <end position="815"/>
    </location>
</feature>
<feature type="region of interest" description="Interaction with ubc-1" evidence="2">
    <location>
        <begin position="1"/>
        <end position="309"/>
    </location>
</feature>
<feature type="region of interest" description="Disordered" evidence="5">
    <location>
        <begin position="1"/>
        <end position="25"/>
    </location>
</feature>
<feature type="region of interest" description="Disordered" evidence="5">
    <location>
        <begin position="269"/>
        <end position="304"/>
    </location>
</feature>
<feature type="coiled-coil region" evidence="3">
    <location>
        <begin position="53"/>
        <end position="92"/>
    </location>
</feature>
<feature type="coiled-coil region" evidence="3">
    <location>
        <begin position="185"/>
        <end position="251"/>
    </location>
</feature>
<feature type="coiled-coil region" evidence="3">
    <location>
        <begin position="311"/>
        <end position="345"/>
    </location>
</feature>
<feature type="coiled-coil region" evidence="3">
    <location>
        <begin position="460"/>
        <end position="616"/>
    </location>
</feature>
<feature type="coiled-coil region" evidence="3">
    <location>
        <begin position="660"/>
        <end position="756"/>
    </location>
</feature>
<feature type="compositionally biased region" description="Low complexity" evidence="5">
    <location>
        <begin position="269"/>
        <end position="298"/>
    </location>
</feature>
<organism>
    <name type="scientific">Caenorhabditis briggsae</name>
    <dbReference type="NCBI Taxonomy" id="6238"/>
    <lineage>
        <taxon>Eukaryota</taxon>
        <taxon>Metazoa</taxon>
        <taxon>Ecdysozoa</taxon>
        <taxon>Nematoda</taxon>
        <taxon>Chromadorea</taxon>
        <taxon>Rhabditida</taxon>
        <taxon>Rhabditina</taxon>
        <taxon>Rhabditomorpha</taxon>
        <taxon>Rhabditoidea</taxon>
        <taxon>Rhabditidae</taxon>
        <taxon>Peloderinae</taxon>
        <taxon>Caenorhabditis</taxon>
    </lineage>
</organism>
<keyword id="KW-0156">Chromatin regulator</keyword>
<keyword id="KW-0175">Coiled coil</keyword>
<keyword id="KW-0479">Metal-binding</keyword>
<keyword id="KW-0539">Nucleus</keyword>
<keyword id="KW-1185">Reference proteome</keyword>
<keyword id="KW-0808">Transferase</keyword>
<keyword id="KW-0833">Ubl conjugation pathway</keyword>
<keyword id="KW-0862">Zinc</keyword>
<keyword id="KW-0863">Zinc-finger</keyword>
<accession>Q60YN5</accession>
<accession>A8XT60</accession>